<reference key="1">
    <citation type="submission" date="2006-12" db="EMBL/GenBank/DDBJ databases">
        <title>Complete sequence of Chlorobium phaeobacteroides DSM 266.</title>
        <authorList>
            <consortium name="US DOE Joint Genome Institute"/>
            <person name="Copeland A."/>
            <person name="Lucas S."/>
            <person name="Lapidus A."/>
            <person name="Barry K."/>
            <person name="Detter J.C."/>
            <person name="Glavina del Rio T."/>
            <person name="Hammon N."/>
            <person name="Israni S."/>
            <person name="Pitluck S."/>
            <person name="Goltsman E."/>
            <person name="Schmutz J."/>
            <person name="Larimer F."/>
            <person name="Land M."/>
            <person name="Hauser L."/>
            <person name="Mikhailova N."/>
            <person name="Li T."/>
            <person name="Overmann J."/>
            <person name="Bryant D.A."/>
            <person name="Richardson P."/>
        </authorList>
    </citation>
    <scope>NUCLEOTIDE SEQUENCE [LARGE SCALE GENOMIC DNA]</scope>
    <source>
        <strain>DSM 266 / SMG 266 / 2430</strain>
    </source>
</reference>
<sequence>MKEVIDTVGRRKTSVARVFMSPGKGRVIINKLPAEEYFRDEVKRQQALRPLALTEKMEDFDIKVNVHGGGVSGQTGAVSLAIARALTEFDESARAVLKKEKLLTRDPRMVERKKFGRKKARKRFQFSKR</sequence>
<proteinExistence type="inferred from homology"/>
<dbReference type="EMBL" id="CP000492">
    <property type="protein sequence ID" value="ABL66023.1"/>
    <property type="molecule type" value="Genomic_DNA"/>
</dbReference>
<dbReference type="RefSeq" id="WP_011745827.1">
    <property type="nucleotide sequence ID" value="NC_008639.1"/>
</dbReference>
<dbReference type="SMR" id="A1BHZ6"/>
<dbReference type="STRING" id="290317.Cpha266_2011"/>
<dbReference type="KEGG" id="cph:Cpha266_2011"/>
<dbReference type="eggNOG" id="COG0103">
    <property type="taxonomic scope" value="Bacteria"/>
</dbReference>
<dbReference type="HOGENOM" id="CLU_046483_2_1_10"/>
<dbReference type="OrthoDB" id="9803965at2"/>
<dbReference type="Proteomes" id="UP000008701">
    <property type="component" value="Chromosome"/>
</dbReference>
<dbReference type="GO" id="GO:0005737">
    <property type="term" value="C:cytoplasm"/>
    <property type="evidence" value="ECO:0007669"/>
    <property type="project" value="UniProtKB-ARBA"/>
</dbReference>
<dbReference type="GO" id="GO:0015935">
    <property type="term" value="C:small ribosomal subunit"/>
    <property type="evidence" value="ECO:0007669"/>
    <property type="project" value="TreeGrafter"/>
</dbReference>
<dbReference type="GO" id="GO:0003723">
    <property type="term" value="F:RNA binding"/>
    <property type="evidence" value="ECO:0007669"/>
    <property type="project" value="TreeGrafter"/>
</dbReference>
<dbReference type="GO" id="GO:0003735">
    <property type="term" value="F:structural constituent of ribosome"/>
    <property type="evidence" value="ECO:0007669"/>
    <property type="project" value="InterPro"/>
</dbReference>
<dbReference type="GO" id="GO:0006412">
    <property type="term" value="P:translation"/>
    <property type="evidence" value="ECO:0007669"/>
    <property type="project" value="UniProtKB-UniRule"/>
</dbReference>
<dbReference type="FunFam" id="3.30.230.10:FF:000001">
    <property type="entry name" value="30S ribosomal protein S9"/>
    <property type="match status" value="1"/>
</dbReference>
<dbReference type="Gene3D" id="3.30.230.10">
    <property type="match status" value="1"/>
</dbReference>
<dbReference type="HAMAP" id="MF_00532_B">
    <property type="entry name" value="Ribosomal_uS9_B"/>
    <property type="match status" value="1"/>
</dbReference>
<dbReference type="InterPro" id="IPR020568">
    <property type="entry name" value="Ribosomal_Su5_D2-typ_SF"/>
</dbReference>
<dbReference type="InterPro" id="IPR000754">
    <property type="entry name" value="Ribosomal_uS9"/>
</dbReference>
<dbReference type="InterPro" id="IPR023035">
    <property type="entry name" value="Ribosomal_uS9_bac/plastid"/>
</dbReference>
<dbReference type="InterPro" id="IPR020574">
    <property type="entry name" value="Ribosomal_uS9_CS"/>
</dbReference>
<dbReference type="InterPro" id="IPR014721">
    <property type="entry name" value="Ribsml_uS5_D2-typ_fold_subgr"/>
</dbReference>
<dbReference type="NCBIfam" id="NF001099">
    <property type="entry name" value="PRK00132.1"/>
    <property type="match status" value="1"/>
</dbReference>
<dbReference type="PANTHER" id="PTHR21569">
    <property type="entry name" value="RIBOSOMAL PROTEIN S9"/>
    <property type="match status" value="1"/>
</dbReference>
<dbReference type="PANTHER" id="PTHR21569:SF1">
    <property type="entry name" value="SMALL RIBOSOMAL SUBUNIT PROTEIN US9M"/>
    <property type="match status" value="1"/>
</dbReference>
<dbReference type="Pfam" id="PF00380">
    <property type="entry name" value="Ribosomal_S9"/>
    <property type="match status" value="1"/>
</dbReference>
<dbReference type="SUPFAM" id="SSF54211">
    <property type="entry name" value="Ribosomal protein S5 domain 2-like"/>
    <property type="match status" value="1"/>
</dbReference>
<dbReference type="PROSITE" id="PS00360">
    <property type="entry name" value="RIBOSOMAL_S9"/>
    <property type="match status" value="1"/>
</dbReference>
<protein>
    <recommendedName>
        <fullName evidence="1">Small ribosomal subunit protein uS9</fullName>
    </recommendedName>
    <alternativeName>
        <fullName evidence="2">30S ribosomal protein S9</fullName>
    </alternativeName>
</protein>
<accession>A1BHZ6</accession>
<comment type="similarity">
    <text evidence="1">Belongs to the universal ribosomal protein uS9 family.</text>
</comment>
<keyword id="KW-1185">Reference proteome</keyword>
<keyword id="KW-0687">Ribonucleoprotein</keyword>
<keyword id="KW-0689">Ribosomal protein</keyword>
<feature type="chain" id="PRO_1000128102" description="Small ribosomal subunit protein uS9">
    <location>
        <begin position="1"/>
        <end position="129"/>
    </location>
</feature>
<organism>
    <name type="scientific">Chlorobium phaeobacteroides (strain DSM 266 / SMG 266 / 2430)</name>
    <dbReference type="NCBI Taxonomy" id="290317"/>
    <lineage>
        <taxon>Bacteria</taxon>
        <taxon>Pseudomonadati</taxon>
        <taxon>Chlorobiota</taxon>
        <taxon>Chlorobiia</taxon>
        <taxon>Chlorobiales</taxon>
        <taxon>Chlorobiaceae</taxon>
        <taxon>Chlorobium/Pelodictyon group</taxon>
        <taxon>Chlorobium</taxon>
    </lineage>
</organism>
<gene>
    <name evidence="1" type="primary">rpsI</name>
    <name type="ordered locus">Cpha266_2011</name>
</gene>
<evidence type="ECO:0000255" key="1">
    <source>
        <dbReference type="HAMAP-Rule" id="MF_00532"/>
    </source>
</evidence>
<evidence type="ECO:0000305" key="2"/>
<name>RS9_CHLPD</name>